<evidence type="ECO:0000255" key="1">
    <source>
        <dbReference type="HAMAP-Rule" id="MF_00122"/>
    </source>
</evidence>
<proteinExistence type="inferred from homology"/>
<gene>
    <name evidence="1" type="primary">gatC</name>
    <name type="ordered locus">RPE_3362</name>
</gene>
<protein>
    <recommendedName>
        <fullName evidence="1">Aspartyl/glutamyl-tRNA(Asn/Gln) amidotransferase subunit C</fullName>
        <shortName evidence="1">Asp/Glu-ADT subunit C</shortName>
        <ecNumber evidence="1">6.3.5.-</ecNumber>
    </recommendedName>
</protein>
<comment type="function">
    <text evidence="1">Allows the formation of correctly charged Asn-tRNA(Asn) or Gln-tRNA(Gln) through the transamidation of misacylated Asp-tRNA(Asn) or Glu-tRNA(Gln) in organisms which lack either or both of asparaginyl-tRNA or glutaminyl-tRNA synthetases. The reaction takes place in the presence of glutamine and ATP through an activated phospho-Asp-tRNA(Asn) or phospho-Glu-tRNA(Gln).</text>
</comment>
<comment type="catalytic activity">
    <reaction evidence="1">
        <text>L-glutamyl-tRNA(Gln) + L-glutamine + ATP + H2O = L-glutaminyl-tRNA(Gln) + L-glutamate + ADP + phosphate + H(+)</text>
        <dbReference type="Rhea" id="RHEA:17521"/>
        <dbReference type="Rhea" id="RHEA-COMP:9681"/>
        <dbReference type="Rhea" id="RHEA-COMP:9684"/>
        <dbReference type="ChEBI" id="CHEBI:15377"/>
        <dbReference type="ChEBI" id="CHEBI:15378"/>
        <dbReference type="ChEBI" id="CHEBI:29985"/>
        <dbReference type="ChEBI" id="CHEBI:30616"/>
        <dbReference type="ChEBI" id="CHEBI:43474"/>
        <dbReference type="ChEBI" id="CHEBI:58359"/>
        <dbReference type="ChEBI" id="CHEBI:78520"/>
        <dbReference type="ChEBI" id="CHEBI:78521"/>
        <dbReference type="ChEBI" id="CHEBI:456216"/>
    </reaction>
</comment>
<comment type="catalytic activity">
    <reaction evidence="1">
        <text>L-aspartyl-tRNA(Asn) + L-glutamine + ATP + H2O = L-asparaginyl-tRNA(Asn) + L-glutamate + ADP + phosphate + 2 H(+)</text>
        <dbReference type="Rhea" id="RHEA:14513"/>
        <dbReference type="Rhea" id="RHEA-COMP:9674"/>
        <dbReference type="Rhea" id="RHEA-COMP:9677"/>
        <dbReference type="ChEBI" id="CHEBI:15377"/>
        <dbReference type="ChEBI" id="CHEBI:15378"/>
        <dbReference type="ChEBI" id="CHEBI:29985"/>
        <dbReference type="ChEBI" id="CHEBI:30616"/>
        <dbReference type="ChEBI" id="CHEBI:43474"/>
        <dbReference type="ChEBI" id="CHEBI:58359"/>
        <dbReference type="ChEBI" id="CHEBI:78515"/>
        <dbReference type="ChEBI" id="CHEBI:78516"/>
        <dbReference type="ChEBI" id="CHEBI:456216"/>
    </reaction>
</comment>
<comment type="subunit">
    <text evidence="1">Heterotrimer of A, B and C subunits.</text>
</comment>
<comment type="similarity">
    <text evidence="1">Belongs to the GatC family.</text>
</comment>
<sequence>MSVDATTVRRIAHLARIAVTDDEVPHLQGELNAMLAFVEQLSEVDVEGVEPMTSVTPMQMKKRADLVDDGEITDKVVANAPASEDHFFLVPKVVE</sequence>
<keyword id="KW-0067">ATP-binding</keyword>
<keyword id="KW-0436">Ligase</keyword>
<keyword id="KW-0547">Nucleotide-binding</keyword>
<keyword id="KW-0648">Protein biosynthesis</keyword>
<name>GATC_RHOP5</name>
<accession>Q07L90</accession>
<feature type="chain" id="PRO_1000016192" description="Aspartyl/glutamyl-tRNA(Asn/Gln) amidotransferase subunit C">
    <location>
        <begin position="1"/>
        <end position="95"/>
    </location>
</feature>
<dbReference type="EC" id="6.3.5.-" evidence="1"/>
<dbReference type="EMBL" id="CP000463">
    <property type="protein sequence ID" value="ABJ07294.1"/>
    <property type="molecule type" value="Genomic_DNA"/>
</dbReference>
<dbReference type="SMR" id="Q07L90"/>
<dbReference type="STRING" id="316055.RPE_3362"/>
<dbReference type="KEGG" id="rpe:RPE_3362"/>
<dbReference type="eggNOG" id="COG0721">
    <property type="taxonomic scope" value="Bacteria"/>
</dbReference>
<dbReference type="HOGENOM" id="CLU_105899_2_0_5"/>
<dbReference type="OrthoDB" id="9794326at2"/>
<dbReference type="GO" id="GO:0050566">
    <property type="term" value="F:asparaginyl-tRNA synthase (glutamine-hydrolyzing) activity"/>
    <property type="evidence" value="ECO:0007669"/>
    <property type="project" value="RHEA"/>
</dbReference>
<dbReference type="GO" id="GO:0005524">
    <property type="term" value="F:ATP binding"/>
    <property type="evidence" value="ECO:0007669"/>
    <property type="project" value="UniProtKB-KW"/>
</dbReference>
<dbReference type="GO" id="GO:0050567">
    <property type="term" value="F:glutaminyl-tRNA synthase (glutamine-hydrolyzing) activity"/>
    <property type="evidence" value="ECO:0007669"/>
    <property type="project" value="UniProtKB-UniRule"/>
</dbReference>
<dbReference type="GO" id="GO:0070681">
    <property type="term" value="P:glutaminyl-tRNAGln biosynthesis via transamidation"/>
    <property type="evidence" value="ECO:0007669"/>
    <property type="project" value="TreeGrafter"/>
</dbReference>
<dbReference type="GO" id="GO:0006450">
    <property type="term" value="P:regulation of translational fidelity"/>
    <property type="evidence" value="ECO:0007669"/>
    <property type="project" value="InterPro"/>
</dbReference>
<dbReference type="GO" id="GO:0006412">
    <property type="term" value="P:translation"/>
    <property type="evidence" value="ECO:0007669"/>
    <property type="project" value="UniProtKB-UniRule"/>
</dbReference>
<dbReference type="Gene3D" id="1.10.20.60">
    <property type="entry name" value="Glu-tRNAGln amidotransferase C subunit, N-terminal domain"/>
    <property type="match status" value="1"/>
</dbReference>
<dbReference type="HAMAP" id="MF_00122">
    <property type="entry name" value="GatC"/>
    <property type="match status" value="1"/>
</dbReference>
<dbReference type="InterPro" id="IPR036113">
    <property type="entry name" value="Asp/Glu-ADT_sf_sub_c"/>
</dbReference>
<dbReference type="InterPro" id="IPR003837">
    <property type="entry name" value="GatC"/>
</dbReference>
<dbReference type="NCBIfam" id="TIGR00135">
    <property type="entry name" value="gatC"/>
    <property type="match status" value="1"/>
</dbReference>
<dbReference type="PANTHER" id="PTHR15004">
    <property type="entry name" value="GLUTAMYL-TRNA(GLN) AMIDOTRANSFERASE SUBUNIT C, MITOCHONDRIAL"/>
    <property type="match status" value="1"/>
</dbReference>
<dbReference type="PANTHER" id="PTHR15004:SF0">
    <property type="entry name" value="GLUTAMYL-TRNA(GLN) AMIDOTRANSFERASE SUBUNIT C, MITOCHONDRIAL"/>
    <property type="match status" value="1"/>
</dbReference>
<dbReference type="Pfam" id="PF02686">
    <property type="entry name" value="GatC"/>
    <property type="match status" value="1"/>
</dbReference>
<dbReference type="SUPFAM" id="SSF141000">
    <property type="entry name" value="Glu-tRNAGln amidotransferase C subunit"/>
    <property type="match status" value="1"/>
</dbReference>
<organism>
    <name type="scientific">Rhodopseudomonas palustris (strain BisA53)</name>
    <dbReference type="NCBI Taxonomy" id="316055"/>
    <lineage>
        <taxon>Bacteria</taxon>
        <taxon>Pseudomonadati</taxon>
        <taxon>Pseudomonadota</taxon>
        <taxon>Alphaproteobacteria</taxon>
        <taxon>Hyphomicrobiales</taxon>
        <taxon>Nitrobacteraceae</taxon>
        <taxon>Rhodopseudomonas</taxon>
    </lineage>
</organism>
<reference key="1">
    <citation type="submission" date="2006-09" db="EMBL/GenBank/DDBJ databases">
        <title>Complete sequence of Rhodopseudomonas palustris BisA53.</title>
        <authorList>
            <consortium name="US DOE Joint Genome Institute"/>
            <person name="Copeland A."/>
            <person name="Lucas S."/>
            <person name="Lapidus A."/>
            <person name="Barry K."/>
            <person name="Detter J.C."/>
            <person name="Glavina del Rio T."/>
            <person name="Hammon N."/>
            <person name="Israni S."/>
            <person name="Dalin E."/>
            <person name="Tice H."/>
            <person name="Pitluck S."/>
            <person name="Chain P."/>
            <person name="Malfatti S."/>
            <person name="Shin M."/>
            <person name="Vergez L."/>
            <person name="Schmutz J."/>
            <person name="Larimer F."/>
            <person name="Land M."/>
            <person name="Hauser L."/>
            <person name="Pelletier D.A."/>
            <person name="Kyrpides N."/>
            <person name="Kim E."/>
            <person name="Harwood C.S."/>
            <person name="Oda Y."/>
            <person name="Richardson P."/>
        </authorList>
    </citation>
    <scope>NUCLEOTIDE SEQUENCE [LARGE SCALE GENOMIC DNA]</scope>
    <source>
        <strain>BisA53</strain>
    </source>
</reference>